<dbReference type="EC" id="2.7.2.1" evidence="1"/>
<dbReference type="EMBL" id="AE016826">
    <property type="protein sequence ID" value="AAO26897.1"/>
    <property type="molecule type" value="Genomic_DNA"/>
</dbReference>
<dbReference type="RefSeq" id="WP_011091298.1">
    <property type="nucleotide sequence ID" value="NC_004545.1"/>
</dbReference>
<dbReference type="SMR" id="Q89AS8"/>
<dbReference type="STRING" id="224915.bbp_164"/>
<dbReference type="KEGG" id="bab:bbp_164"/>
<dbReference type="eggNOG" id="COG0282">
    <property type="taxonomic scope" value="Bacteria"/>
</dbReference>
<dbReference type="HOGENOM" id="CLU_020352_0_1_6"/>
<dbReference type="OrthoDB" id="9802453at2"/>
<dbReference type="UniPathway" id="UPA00340">
    <property type="reaction ID" value="UER00458"/>
</dbReference>
<dbReference type="Proteomes" id="UP000000601">
    <property type="component" value="Chromosome"/>
</dbReference>
<dbReference type="GO" id="GO:0005829">
    <property type="term" value="C:cytosol"/>
    <property type="evidence" value="ECO:0007669"/>
    <property type="project" value="TreeGrafter"/>
</dbReference>
<dbReference type="GO" id="GO:0008776">
    <property type="term" value="F:acetate kinase activity"/>
    <property type="evidence" value="ECO:0007669"/>
    <property type="project" value="UniProtKB-UniRule"/>
</dbReference>
<dbReference type="GO" id="GO:0005524">
    <property type="term" value="F:ATP binding"/>
    <property type="evidence" value="ECO:0007669"/>
    <property type="project" value="UniProtKB-KW"/>
</dbReference>
<dbReference type="GO" id="GO:0000287">
    <property type="term" value="F:magnesium ion binding"/>
    <property type="evidence" value="ECO:0007669"/>
    <property type="project" value="UniProtKB-UniRule"/>
</dbReference>
<dbReference type="GO" id="GO:0006083">
    <property type="term" value="P:acetate metabolic process"/>
    <property type="evidence" value="ECO:0007669"/>
    <property type="project" value="TreeGrafter"/>
</dbReference>
<dbReference type="GO" id="GO:0006085">
    <property type="term" value="P:acetyl-CoA biosynthetic process"/>
    <property type="evidence" value="ECO:0007669"/>
    <property type="project" value="UniProtKB-UniRule"/>
</dbReference>
<dbReference type="Gene3D" id="3.30.420.40">
    <property type="match status" value="2"/>
</dbReference>
<dbReference type="HAMAP" id="MF_00020">
    <property type="entry name" value="Acetate_kinase"/>
    <property type="match status" value="1"/>
</dbReference>
<dbReference type="InterPro" id="IPR004372">
    <property type="entry name" value="Ac/propionate_kinase"/>
</dbReference>
<dbReference type="InterPro" id="IPR000890">
    <property type="entry name" value="Aliphatic_acid_kin_short-chain"/>
</dbReference>
<dbReference type="InterPro" id="IPR023865">
    <property type="entry name" value="Aliphatic_acid_kinase_CS"/>
</dbReference>
<dbReference type="InterPro" id="IPR043129">
    <property type="entry name" value="ATPase_NBD"/>
</dbReference>
<dbReference type="NCBIfam" id="TIGR00016">
    <property type="entry name" value="ackA"/>
    <property type="match status" value="1"/>
</dbReference>
<dbReference type="PANTHER" id="PTHR21060">
    <property type="entry name" value="ACETATE KINASE"/>
    <property type="match status" value="1"/>
</dbReference>
<dbReference type="PANTHER" id="PTHR21060:SF17">
    <property type="entry name" value="PROPIONATE KINASE"/>
    <property type="match status" value="1"/>
</dbReference>
<dbReference type="Pfam" id="PF00871">
    <property type="entry name" value="Acetate_kinase"/>
    <property type="match status" value="1"/>
</dbReference>
<dbReference type="PIRSF" id="PIRSF000722">
    <property type="entry name" value="Acetate_prop_kin"/>
    <property type="match status" value="1"/>
</dbReference>
<dbReference type="PRINTS" id="PR00471">
    <property type="entry name" value="ACETATEKNASE"/>
</dbReference>
<dbReference type="SUPFAM" id="SSF53067">
    <property type="entry name" value="Actin-like ATPase domain"/>
    <property type="match status" value="2"/>
</dbReference>
<dbReference type="PROSITE" id="PS01075">
    <property type="entry name" value="ACETATE_KINASE_1"/>
    <property type="match status" value="1"/>
</dbReference>
<dbReference type="PROSITE" id="PS01076">
    <property type="entry name" value="ACETATE_KINASE_2"/>
    <property type="match status" value="1"/>
</dbReference>
<evidence type="ECO:0000255" key="1">
    <source>
        <dbReference type="HAMAP-Rule" id="MF_00020"/>
    </source>
</evidence>
<feature type="chain" id="PRO_0000107540" description="Acetate kinase">
    <location>
        <begin position="1"/>
        <end position="400"/>
    </location>
</feature>
<feature type="active site" description="Proton donor/acceptor" evidence="1">
    <location>
        <position position="150"/>
    </location>
</feature>
<feature type="binding site" evidence="1">
    <location>
        <position position="10"/>
    </location>
    <ligand>
        <name>Mg(2+)</name>
        <dbReference type="ChEBI" id="CHEBI:18420"/>
    </ligand>
</feature>
<feature type="binding site" evidence="1">
    <location>
        <position position="17"/>
    </location>
    <ligand>
        <name>ATP</name>
        <dbReference type="ChEBI" id="CHEBI:30616"/>
    </ligand>
</feature>
<feature type="binding site" evidence="1">
    <location>
        <position position="91"/>
    </location>
    <ligand>
        <name>substrate</name>
    </ligand>
</feature>
<feature type="binding site" evidence="1">
    <location>
        <begin position="210"/>
        <end position="214"/>
    </location>
    <ligand>
        <name>ATP</name>
        <dbReference type="ChEBI" id="CHEBI:30616"/>
    </ligand>
</feature>
<feature type="binding site" evidence="1">
    <location>
        <begin position="285"/>
        <end position="287"/>
    </location>
    <ligand>
        <name>ATP</name>
        <dbReference type="ChEBI" id="CHEBI:30616"/>
    </ligand>
</feature>
<feature type="binding site" evidence="1">
    <location>
        <begin position="333"/>
        <end position="337"/>
    </location>
    <ligand>
        <name>ATP</name>
        <dbReference type="ChEBI" id="CHEBI:30616"/>
    </ligand>
</feature>
<feature type="binding site" evidence="1">
    <location>
        <position position="387"/>
    </location>
    <ligand>
        <name>Mg(2+)</name>
        <dbReference type="ChEBI" id="CHEBI:18420"/>
    </ligand>
</feature>
<feature type="site" description="Transition state stabilizer" evidence="1">
    <location>
        <position position="182"/>
    </location>
</feature>
<feature type="site" description="Transition state stabilizer" evidence="1">
    <location>
        <position position="243"/>
    </location>
</feature>
<protein>
    <recommendedName>
        <fullName evidence="1">Acetate kinase</fullName>
        <ecNumber evidence="1">2.7.2.1</ecNumber>
    </recommendedName>
    <alternativeName>
        <fullName evidence="1">Acetokinase</fullName>
    </alternativeName>
</protein>
<accession>Q89AS8</accession>
<comment type="function">
    <text evidence="1">Catalyzes the formation of acetyl phosphate from acetate and ATP. Can also catalyze the reverse reaction.</text>
</comment>
<comment type="catalytic activity">
    <reaction evidence="1">
        <text>acetate + ATP = acetyl phosphate + ADP</text>
        <dbReference type="Rhea" id="RHEA:11352"/>
        <dbReference type="ChEBI" id="CHEBI:22191"/>
        <dbReference type="ChEBI" id="CHEBI:30089"/>
        <dbReference type="ChEBI" id="CHEBI:30616"/>
        <dbReference type="ChEBI" id="CHEBI:456216"/>
        <dbReference type="EC" id="2.7.2.1"/>
    </reaction>
</comment>
<comment type="cofactor">
    <cofactor evidence="1">
        <name>Mg(2+)</name>
        <dbReference type="ChEBI" id="CHEBI:18420"/>
    </cofactor>
    <cofactor evidence="1">
        <name>Mn(2+)</name>
        <dbReference type="ChEBI" id="CHEBI:29035"/>
    </cofactor>
    <text evidence="1">Mg(2+). Can also accept Mn(2+).</text>
</comment>
<comment type="pathway">
    <text evidence="1">Metabolic intermediate biosynthesis; acetyl-CoA biosynthesis; acetyl-CoA from acetate: step 1/2.</text>
</comment>
<comment type="subunit">
    <text evidence="1">Homodimer.</text>
</comment>
<comment type="subcellular location">
    <subcellularLocation>
        <location evidence="1">Cytoplasm</location>
    </subcellularLocation>
</comment>
<comment type="similarity">
    <text evidence="1">Belongs to the acetokinase family.</text>
</comment>
<sequence length="400" mass="44388">MFNKLVLILNCGSSSLKFSVVSSDNYTTKLSGIVEFLNLSQIRFFWKIKKKEYVRVINKSKSYDYALNYILTKILKEESKIFNNIACVGHRVVHGGVNLNKSVLITQEIIKLITDACSFAPLHNPINLLGIKASHAVLPHLKEKNVAVFDTSFHSSIPKFAYLYAIPYKFYKKFGIRKYGAHGISCQYSVCRSSELLQIELTSLNIIICHLGGGASVSVVKNGVCVDTSMGLTPLEGLIMGTRSGDIDPSVIFFMNKQLNLSISTINNILINKSGLLGLSGVSSDFRNLESEYNSNIRIKLAIDMFCYRLSKYISGYMSVVKGKLHGIVFTGGIGENSSLVRSIVISKLAFLNFKLNSDINMLMKSGKEGFINIKNTFPILVIPANEELIIAKESFSEIN</sequence>
<name>ACKA_BUCBP</name>
<gene>
    <name evidence="1" type="primary">ackA</name>
    <name type="ordered locus">bbp_164</name>
</gene>
<proteinExistence type="inferred from homology"/>
<keyword id="KW-0067">ATP-binding</keyword>
<keyword id="KW-0963">Cytoplasm</keyword>
<keyword id="KW-0418">Kinase</keyword>
<keyword id="KW-0460">Magnesium</keyword>
<keyword id="KW-0479">Metal-binding</keyword>
<keyword id="KW-0547">Nucleotide-binding</keyword>
<keyword id="KW-1185">Reference proteome</keyword>
<keyword id="KW-0808">Transferase</keyword>
<organism>
    <name type="scientific">Buchnera aphidicola subsp. Baizongia pistaciae (strain Bp)</name>
    <dbReference type="NCBI Taxonomy" id="224915"/>
    <lineage>
        <taxon>Bacteria</taxon>
        <taxon>Pseudomonadati</taxon>
        <taxon>Pseudomonadota</taxon>
        <taxon>Gammaproteobacteria</taxon>
        <taxon>Enterobacterales</taxon>
        <taxon>Erwiniaceae</taxon>
        <taxon>Buchnera</taxon>
    </lineage>
</organism>
<reference key="1">
    <citation type="journal article" date="2003" name="Proc. Natl. Acad. Sci. U.S.A.">
        <title>Reductive genome evolution in Buchnera aphidicola.</title>
        <authorList>
            <person name="van Ham R.C.H.J."/>
            <person name="Kamerbeek J."/>
            <person name="Palacios C."/>
            <person name="Rausell C."/>
            <person name="Abascal F."/>
            <person name="Bastolla U."/>
            <person name="Fernandez J.M."/>
            <person name="Jimenez L."/>
            <person name="Postigo M."/>
            <person name="Silva F.J."/>
            <person name="Tamames J."/>
            <person name="Viguera E."/>
            <person name="Latorre A."/>
            <person name="Valencia A."/>
            <person name="Moran F."/>
            <person name="Moya A."/>
        </authorList>
    </citation>
    <scope>NUCLEOTIDE SEQUENCE [LARGE SCALE GENOMIC DNA]</scope>
    <source>
        <strain>Bp</strain>
    </source>
</reference>